<evidence type="ECO:0000255" key="1">
    <source>
        <dbReference type="HAMAP-Rule" id="MF_00367"/>
    </source>
</evidence>
<evidence type="ECO:0000255" key="2">
    <source>
        <dbReference type="PROSITE-ProRule" id="PRU01050"/>
    </source>
</evidence>
<protein>
    <recommendedName>
        <fullName evidence="1">GTPase Era</fullName>
    </recommendedName>
</protein>
<keyword id="KW-0997">Cell inner membrane</keyword>
<keyword id="KW-1003">Cell membrane</keyword>
<keyword id="KW-0963">Cytoplasm</keyword>
<keyword id="KW-0342">GTP-binding</keyword>
<keyword id="KW-0472">Membrane</keyword>
<keyword id="KW-0547">Nucleotide-binding</keyword>
<keyword id="KW-0690">Ribosome biogenesis</keyword>
<keyword id="KW-0694">RNA-binding</keyword>
<keyword id="KW-0699">rRNA-binding</keyword>
<feature type="chain" id="PRO_0000180074" description="GTPase Era">
    <location>
        <begin position="1"/>
        <end position="299"/>
    </location>
</feature>
<feature type="domain" description="Era-type G" evidence="2">
    <location>
        <begin position="9"/>
        <end position="177"/>
    </location>
</feature>
<feature type="domain" description="KH type-2" evidence="1">
    <location>
        <begin position="200"/>
        <end position="284"/>
    </location>
</feature>
<feature type="region of interest" description="G1" evidence="2">
    <location>
        <begin position="17"/>
        <end position="24"/>
    </location>
</feature>
<feature type="region of interest" description="G2" evidence="2">
    <location>
        <begin position="43"/>
        <end position="47"/>
    </location>
</feature>
<feature type="region of interest" description="G3" evidence="2">
    <location>
        <begin position="64"/>
        <end position="67"/>
    </location>
</feature>
<feature type="region of interest" description="G4" evidence="2">
    <location>
        <begin position="126"/>
        <end position="129"/>
    </location>
</feature>
<feature type="region of interest" description="G5" evidence="2">
    <location>
        <begin position="156"/>
        <end position="158"/>
    </location>
</feature>
<feature type="binding site" evidence="1">
    <location>
        <begin position="17"/>
        <end position="24"/>
    </location>
    <ligand>
        <name>GTP</name>
        <dbReference type="ChEBI" id="CHEBI:37565"/>
    </ligand>
</feature>
<feature type="binding site" evidence="1">
    <location>
        <begin position="64"/>
        <end position="68"/>
    </location>
    <ligand>
        <name>GTP</name>
        <dbReference type="ChEBI" id="CHEBI:37565"/>
    </ligand>
</feature>
<feature type="binding site" evidence="1">
    <location>
        <begin position="126"/>
        <end position="129"/>
    </location>
    <ligand>
        <name>GTP</name>
        <dbReference type="ChEBI" id="CHEBI:37565"/>
    </ligand>
</feature>
<reference key="1">
    <citation type="journal article" date="2002" name="Nature">
        <title>Comparison of the genomes of two Xanthomonas pathogens with differing host specificities.</title>
        <authorList>
            <person name="da Silva A.C.R."/>
            <person name="Ferro J.A."/>
            <person name="Reinach F.C."/>
            <person name="Farah C.S."/>
            <person name="Furlan L.R."/>
            <person name="Quaggio R.B."/>
            <person name="Monteiro-Vitorello C.B."/>
            <person name="Van Sluys M.A."/>
            <person name="Almeida N.F. Jr."/>
            <person name="Alves L.M.C."/>
            <person name="do Amaral A.M."/>
            <person name="Bertolini M.C."/>
            <person name="Camargo L.E.A."/>
            <person name="Camarotte G."/>
            <person name="Cannavan F."/>
            <person name="Cardozo J."/>
            <person name="Chambergo F."/>
            <person name="Ciapina L.P."/>
            <person name="Cicarelli R.M.B."/>
            <person name="Coutinho L.L."/>
            <person name="Cursino-Santos J.R."/>
            <person name="El-Dorry H."/>
            <person name="Faria J.B."/>
            <person name="Ferreira A.J.S."/>
            <person name="Ferreira R.C.C."/>
            <person name="Ferro M.I.T."/>
            <person name="Formighieri E.F."/>
            <person name="Franco M.C."/>
            <person name="Greggio C.C."/>
            <person name="Gruber A."/>
            <person name="Katsuyama A.M."/>
            <person name="Kishi L.T."/>
            <person name="Leite R.P."/>
            <person name="Lemos E.G.M."/>
            <person name="Lemos M.V.F."/>
            <person name="Locali E.C."/>
            <person name="Machado M.A."/>
            <person name="Madeira A.M.B.N."/>
            <person name="Martinez-Rossi N.M."/>
            <person name="Martins E.C."/>
            <person name="Meidanis J."/>
            <person name="Menck C.F.M."/>
            <person name="Miyaki C.Y."/>
            <person name="Moon D.H."/>
            <person name="Moreira L.M."/>
            <person name="Novo M.T.M."/>
            <person name="Okura V.K."/>
            <person name="Oliveira M.C."/>
            <person name="Oliveira V.R."/>
            <person name="Pereira H.A."/>
            <person name="Rossi A."/>
            <person name="Sena J.A.D."/>
            <person name="Silva C."/>
            <person name="de Souza R.F."/>
            <person name="Spinola L.A.F."/>
            <person name="Takita M.A."/>
            <person name="Tamura R.E."/>
            <person name="Teixeira E.C."/>
            <person name="Tezza R.I.D."/>
            <person name="Trindade dos Santos M."/>
            <person name="Truffi D."/>
            <person name="Tsai S.M."/>
            <person name="White F.F."/>
            <person name="Setubal J.C."/>
            <person name="Kitajima J.P."/>
        </authorList>
    </citation>
    <scope>NUCLEOTIDE SEQUENCE [LARGE SCALE GENOMIC DNA]</scope>
    <source>
        <strain>306</strain>
    </source>
</reference>
<accession>Q8PMU9</accession>
<comment type="function">
    <text evidence="1">An essential GTPase that binds both GDP and GTP, with rapid nucleotide exchange. Plays a role in 16S rRNA processing and 30S ribosomal subunit biogenesis and possibly also in cell cycle regulation and energy metabolism.</text>
</comment>
<comment type="subunit">
    <text evidence="1">Monomer.</text>
</comment>
<comment type="subcellular location">
    <subcellularLocation>
        <location>Cytoplasm</location>
    </subcellularLocation>
    <subcellularLocation>
        <location evidence="1">Cell inner membrane</location>
        <topology evidence="1">Peripheral membrane protein</topology>
    </subcellularLocation>
</comment>
<comment type="similarity">
    <text evidence="1 2">Belongs to the TRAFAC class TrmE-Era-EngA-EngB-Septin-like GTPase superfamily. Era GTPase family.</text>
</comment>
<sequence length="299" mass="32804">MSEITSPHRSGSVAVIGRPNVGKSTLTNALVGAKVSIVSNRPQTTRHRLLGIATFPEGQLVLVDTPGLHREQKRAMNRVMNRAARGSLEGVDAAVLVIEAGRWDEEDTLAFRVLSDAGVPVVLVVNKVDRLKDKTALFPFLAQVSEGRTFAAVHPVSALKRKGLDALVGDLLKLVPEAEAMFGEDEITDRSQRFLAGELVREQLMRQLGEELPYATTVEIERFAEDGALLRIGAVIWVEREGQKAIVIGKGGTRLKEIGGKARLQMERLFGAKVFLETWVRVREGWSDDEAALKAFGYE</sequence>
<proteinExistence type="inferred from homology"/>
<organism>
    <name type="scientific">Xanthomonas axonopodis pv. citri (strain 306)</name>
    <dbReference type="NCBI Taxonomy" id="190486"/>
    <lineage>
        <taxon>Bacteria</taxon>
        <taxon>Pseudomonadati</taxon>
        <taxon>Pseudomonadota</taxon>
        <taxon>Gammaproteobacteria</taxon>
        <taxon>Lysobacterales</taxon>
        <taxon>Lysobacteraceae</taxon>
        <taxon>Xanthomonas</taxon>
    </lineage>
</organism>
<name>ERA_XANAC</name>
<dbReference type="EMBL" id="AE008923">
    <property type="protein sequence ID" value="AAM36197.1"/>
    <property type="molecule type" value="Genomic_DNA"/>
</dbReference>
<dbReference type="RefSeq" id="WP_003488210.1">
    <property type="nucleotide sequence ID" value="NC_003919.1"/>
</dbReference>
<dbReference type="SMR" id="Q8PMU9"/>
<dbReference type="GeneID" id="66910495"/>
<dbReference type="KEGG" id="xac:XAC1326"/>
<dbReference type="eggNOG" id="COG1159">
    <property type="taxonomic scope" value="Bacteria"/>
</dbReference>
<dbReference type="HOGENOM" id="CLU_038009_1_2_6"/>
<dbReference type="Proteomes" id="UP000000576">
    <property type="component" value="Chromosome"/>
</dbReference>
<dbReference type="GO" id="GO:0005829">
    <property type="term" value="C:cytosol"/>
    <property type="evidence" value="ECO:0007669"/>
    <property type="project" value="TreeGrafter"/>
</dbReference>
<dbReference type="GO" id="GO:0005886">
    <property type="term" value="C:plasma membrane"/>
    <property type="evidence" value="ECO:0007669"/>
    <property type="project" value="UniProtKB-SubCell"/>
</dbReference>
<dbReference type="GO" id="GO:0005525">
    <property type="term" value="F:GTP binding"/>
    <property type="evidence" value="ECO:0007669"/>
    <property type="project" value="UniProtKB-UniRule"/>
</dbReference>
<dbReference type="GO" id="GO:0003924">
    <property type="term" value="F:GTPase activity"/>
    <property type="evidence" value="ECO:0007669"/>
    <property type="project" value="UniProtKB-UniRule"/>
</dbReference>
<dbReference type="GO" id="GO:0043024">
    <property type="term" value="F:ribosomal small subunit binding"/>
    <property type="evidence" value="ECO:0007669"/>
    <property type="project" value="TreeGrafter"/>
</dbReference>
<dbReference type="GO" id="GO:0070181">
    <property type="term" value="F:small ribosomal subunit rRNA binding"/>
    <property type="evidence" value="ECO:0007669"/>
    <property type="project" value="UniProtKB-UniRule"/>
</dbReference>
<dbReference type="GO" id="GO:0000028">
    <property type="term" value="P:ribosomal small subunit assembly"/>
    <property type="evidence" value="ECO:0007669"/>
    <property type="project" value="TreeGrafter"/>
</dbReference>
<dbReference type="CDD" id="cd04163">
    <property type="entry name" value="Era"/>
    <property type="match status" value="1"/>
</dbReference>
<dbReference type="CDD" id="cd22534">
    <property type="entry name" value="KH-II_Era"/>
    <property type="match status" value="1"/>
</dbReference>
<dbReference type="FunFam" id="3.30.300.20:FF:000003">
    <property type="entry name" value="GTPase Era"/>
    <property type="match status" value="1"/>
</dbReference>
<dbReference type="FunFam" id="3.40.50.300:FF:001543">
    <property type="entry name" value="GTPase Era"/>
    <property type="match status" value="1"/>
</dbReference>
<dbReference type="Gene3D" id="3.30.300.20">
    <property type="match status" value="1"/>
</dbReference>
<dbReference type="Gene3D" id="3.40.50.300">
    <property type="entry name" value="P-loop containing nucleotide triphosphate hydrolases"/>
    <property type="match status" value="1"/>
</dbReference>
<dbReference type="HAMAP" id="MF_00367">
    <property type="entry name" value="GTPase_Era"/>
    <property type="match status" value="1"/>
</dbReference>
<dbReference type="InterPro" id="IPR030388">
    <property type="entry name" value="G_ERA_dom"/>
</dbReference>
<dbReference type="InterPro" id="IPR006073">
    <property type="entry name" value="GTP-bd"/>
</dbReference>
<dbReference type="InterPro" id="IPR005662">
    <property type="entry name" value="GTPase_Era-like"/>
</dbReference>
<dbReference type="InterPro" id="IPR015946">
    <property type="entry name" value="KH_dom-like_a/b"/>
</dbReference>
<dbReference type="InterPro" id="IPR004044">
    <property type="entry name" value="KH_dom_type_2"/>
</dbReference>
<dbReference type="InterPro" id="IPR009019">
    <property type="entry name" value="KH_sf_prok-type"/>
</dbReference>
<dbReference type="InterPro" id="IPR027417">
    <property type="entry name" value="P-loop_NTPase"/>
</dbReference>
<dbReference type="InterPro" id="IPR005225">
    <property type="entry name" value="Small_GTP-bd"/>
</dbReference>
<dbReference type="NCBIfam" id="TIGR00436">
    <property type="entry name" value="era"/>
    <property type="match status" value="1"/>
</dbReference>
<dbReference type="NCBIfam" id="NF000908">
    <property type="entry name" value="PRK00089.1"/>
    <property type="match status" value="1"/>
</dbReference>
<dbReference type="NCBIfam" id="TIGR00231">
    <property type="entry name" value="small_GTP"/>
    <property type="match status" value="1"/>
</dbReference>
<dbReference type="PANTHER" id="PTHR42698">
    <property type="entry name" value="GTPASE ERA"/>
    <property type="match status" value="1"/>
</dbReference>
<dbReference type="PANTHER" id="PTHR42698:SF1">
    <property type="entry name" value="GTPASE ERA, MITOCHONDRIAL"/>
    <property type="match status" value="1"/>
</dbReference>
<dbReference type="Pfam" id="PF07650">
    <property type="entry name" value="KH_2"/>
    <property type="match status" value="1"/>
</dbReference>
<dbReference type="Pfam" id="PF01926">
    <property type="entry name" value="MMR_HSR1"/>
    <property type="match status" value="1"/>
</dbReference>
<dbReference type="PRINTS" id="PR00326">
    <property type="entry name" value="GTP1OBG"/>
</dbReference>
<dbReference type="SUPFAM" id="SSF52540">
    <property type="entry name" value="P-loop containing nucleoside triphosphate hydrolases"/>
    <property type="match status" value="1"/>
</dbReference>
<dbReference type="SUPFAM" id="SSF54814">
    <property type="entry name" value="Prokaryotic type KH domain (KH-domain type II)"/>
    <property type="match status" value="1"/>
</dbReference>
<dbReference type="PROSITE" id="PS51713">
    <property type="entry name" value="G_ERA"/>
    <property type="match status" value="1"/>
</dbReference>
<dbReference type="PROSITE" id="PS50823">
    <property type="entry name" value="KH_TYPE_2"/>
    <property type="match status" value="1"/>
</dbReference>
<gene>
    <name evidence="1" type="primary">era</name>
    <name type="ordered locus">XAC1326</name>
</gene>